<keyword id="KW-0963">Cytoplasm</keyword>
<keyword id="KW-0342">GTP-binding</keyword>
<keyword id="KW-0396">Initiation factor</keyword>
<keyword id="KW-0547">Nucleotide-binding</keyword>
<keyword id="KW-0648">Protein biosynthesis</keyword>
<keyword id="KW-1185">Reference proteome</keyword>
<sequence length="835" mass="89512">MSDSDGKKTLGLRGSGSRPGNVKQSFSHGRTKNVVVETKRKRVVVPKPGAGKGGAGGVAAGDASRRPAGISDAEMDRRLKALQAAKAREAEEAAQREAEEKARAEERERRRAEQEAKEREQREAEEKARQKAEEEERKRQEEAEAAKKRAAADKAAAAAPKSDAGVAPARPAPGGAPKPAAGPRKAEREREERGRGAKGRNDGGRRSGKLTLSQATGGEGGRQRSVASMKRKQERARQKAMGQVEREKIIRDVQLPEAIVVSELANRMAERVADVVKALMNMGMMVTQNQTIDADTAELIIEEFGHNVVRVSDADVEDVIKEIEDKEEDLQPRPPVITIMGHVDHGKTSLLDAIRDAKVVAGEAGGITQHIGAYQVTTDSGAVLSFLDTPGHAAFTSMRSRGAQVTDIVVLVVAADDSVMPQTVEAINHAKAAGVPMIVAINKIDKPAADPNKVRAELLQHEVIVEAMSGEVQDVEVSAHTGQGLDELLEAIALQAEILELKANPNRAAQGAVIEAQLDVGRGPVATVLVQTGTLRQGDIFVVGEQYGKVRALINDKGERVKEAGPSVPVEVLGLNGTPEAGDVLNVTETEAQAREIAEYREQAAKDKRAAAGAATTLEQLMQKAKEDENVSELPILVKADVQGSAEAIVQAMEKIGNDEVRVRVLHSGVGAITETDIGLAEASGAPVMGFNVRANASARNTANQKGVEIRYYSVIYDLVDDVKAAASGLLSAEIKENFIGYAEIKDVFKVSNVGKVAGCLVTEGVARRSAGVRLLRDNVVIHEGTLKTLKRFKDEVAEVQSGQECGMAFENYDDIRPKDVIEIFEREEVTRTLD</sequence>
<organism>
    <name type="scientific">Ruegeria sp. (strain TM1040)</name>
    <name type="common">Silicibacter sp.</name>
    <dbReference type="NCBI Taxonomy" id="292414"/>
    <lineage>
        <taxon>Bacteria</taxon>
        <taxon>Pseudomonadati</taxon>
        <taxon>Pseudomonadota</taxon>
        <taxon>Alphaproteobacteria</taxon>
        <taxon>Rhodobacterales</taxon>
        <taxon>Roseobacteraceae</taxon>
        <taxon>Ruegeria</taxon>
    </lineage>
</organism>
<evidence type="ECO:0000250" key="1"/>
<evidence type="ECO:0000255" key="2">
    <source>
        <dbReference type="HAMAP-Rule" id="MF_00100"/>
    </source>
</evidence>
<evidence type="ECO:0000256" key="3">
    <source>
        <dbReference type="SAM" id="MobiDB-lite"/>
    </source>
</evidence>
<feature type="chain" id="PRO_1000008339" description="Translation initiation factor IF-2">
    <location>
        <begin position="1"/>
        <end position="835"/>
    </location>
</feature>
<feature type="domain" description="tr-type G">
    <location>
        <begin position="332"/>
        <end position="500"/>
    </location>
</feature>
<feature type="region of interest" description="Disordered" evidence="3">
    <location>
        <begin position="1"/>
        <end position="240"/>
    </location>
</feature>
<feature type="region of interest" description="G1" evidence="1">
    <location>
        <begin position="341"/>
        <end position="348"/>
    </location>
</feature>
<feature type="region of interest" description="G2" evidence="1">
    <location>
        <begin position="366"/>
        <end position="370"/>
    </location>
</feature>
<feature type="region of interest" description="G3" evidence="1">
    <location>
        <begin position="388"/>
        <end position="391"/>
    </location>
</feature>
<feature type="region of interest" description="G4" evidence="1">
    <location>
        <begin position="442"/>
        <end position="445"/>
    </location>
</feature>
<feature type="region of interest" description="G5" evidence="1">
    <location>
        <begin position="478"/>
        <end position="480"/>
    </location>
</feature>
<feature type="compositionally biased region" description="Gly residues" evidence="3">
    <location>
        <begin position="50"/>
        <end position="59"/>
    </location>
</feature>
<feature type="compositionally biased region" description="Basic and acidic residues" evidence="3">
    <location>
        <begin position="86"/>
        <end position="152"/>
    </location>
</feature>
<feature type="compositionally biased region" description="Low complexity" evidence="3">
    <location>
        <begin position="153"/>
        <end position="169"/>
    </location>
</feature>
<feature type="compositionally biased region" description="Basic and acidic residues" evidence="3">
    <location>
        <begin position="184"/>
        <end position="205"/>
    </location>
</feature>
<feature type="binding site" evidence="2">
    <location>
        <begin position="341"/>
        <end position="348"/>
    </location>
    <ligand>
        <name>GTP</name>
        <dbReference type="ChEBI" id="CHEBI:37565"/>
    </ligand>
</feature>
<feature type="binding site" evidence="2">
    <location>
        <begin position="388"/>
        <end position="392"/>
    </location>
    <ligand>
        <name>GTP</name>
        <dbReference type="ChEBI" id="CHEBI:37565"/>
    </ligand>
</feature>
<feature type="binding site" evidence="2">
    <location>
        <begin position="442"/>
        <end position="445"/>
    </location>
    <ligand>
        <name>GTP</name>
        <dbReference type="ChEBI" id="CHEBI:37565"/>
    </ligand>
</feature>
<accession>Q1GCH2</accession>
<gene>
    <name evidence="2" type="primary">infB</name>
    <name type="ordered locus">TM1040_2912</name>
</gene>
<reference key="1">
    <citation type="submission" date="2006-05" db="EMBL/GenBank/DDBJ databases">
        <title>Complete sequence of chromosome of Silicibacter sp. TM1040.</title>
        <authorList>
            <consortium name="US DOE Joint Genome Institute"/>
            <person name="Copeland A."/>
            <person name="Lucas S."/>
            <person name="Lapidus A."/>
            <person name="Barry K."/>
            <person name="Detter J.C."/>
            <person name="Glavina del Rio T."/>
            <person name="Hammon N."/>
            <person name="Israni S."/>
            <person name="Dalin E."/>
            <person name="Tice H."/>
            <person name="Pitluck S."/>
            <person name="Brettin T."/>
            <person name="Bruce D."/>
            <person name="Han C."/>
            <person name="Tapia R."/>
            <person name="Goodwin L."/>
            <person name="Thompson L.S."/>
            <person name="Gilna P."/>
            <person name="Schmutz J."/>
            <person name="Larimer F."/>
            <person name="Land M."/>
            <person name="Hauser L."/>
            <person name="Kyrpides N."/>
            <person name="Kim E."/>
            <person name="Belas R."/>
            <person name="Moran M.A."/>
            <person name="Buchan A."/>
            <person name="Gonzalez J.M."/>
            <person name="Schell M.A."/>
            <person name="Sun F."/>
            <person name="Richardson P."/>
        </authorList>
    </citation>
    <scope>NUCLEOTIDE SEQUENCE [LARGE SCALE GENOMIC DNA]</scope>
    <source>
        <strain>TM1040</strain>
    </source>
</reference>
<proteinExistence type="inferred from homology"/>
<dbReference type="EMBL" id="CP000377">
    <property type="protein sequence ID" value="ABF65644.1"/>
    <property type="molecule type" value="Genomic_DNA"/>
</dbReference>
<dbReference type="RefSeq" id="WP_011540225.1">
    <property type="nucleotide sequence ID" value="NC_008044.1"/>
</dbReference>
<dbReference type="SMR" id="Q1GCH2"/>
<dbReference type="STRING" id="292414.TM1040_2912"/>
<dbReference type="KEGG" id="sit:TM1040_2912"/>
<dbReference type="eggNOG" id="COG0532">
    <property type="taxonomic scope" value="Bacteria"/>
</dbReference>
<dbReference type="HOGENOM" id="CLU_006301_10_1_5"/>
<dbReference type="OrthoDB" id="9811804at2"/>
<dbReference type="Proteomes" id="UP000000636">
    <property type="component" value="Chromosome"/>
</dbReference>
<dbReference type="GO" id="GO:0005829">
    <property type="term" value="C:cytosol"/>
    <property type="evidence" value="ECO:0007669"/>
    <property type="project" value="TreeGrafter"/>
</dbReference>
<dbReference type="GO" id="GO:0005525">
    <property type="term" value="F:GTP binding"/>
    <property type="evidence" value="ECO:0007669"/>
    <property type="project" value="UniProtKB-KW"/>
</dbReference>
<dbReference type="GO" id="GO:0003924">
    <property type="term" value="F:GTPase activity"/>
    <property type="evidence" value="ECO:0007669"/>
    <property type="project" value="UniProtKB-UniRule"/>
</dbReference>
<dbReference type="GO" id="GO:0003743">
    <property type="term" value="F:translation initiation factor activity"/>
    <property type="evidence" value="ECO:0007669"/>
    <property type="project" value="UniProtKB-UniRule"/>
</dbReference>
<dbReference type="CDD" id="cd01887">
    <property type="entry name" value="IF2_eIF5B"/>
    <property type="match status" value="1"/>
</dbReference>
<dbReference type="CDD" id="cd03702">
    <property type="entry name" value="IF2_mtIF2_II"/>
    <property type="match status" value="1"/>
</dbReference>
<dbReference type="CDD" id="cd03692">
    <property type="entry name" value="mtIF2_IVc"/>
    <property type="match status" value="1"/>
</dbReference>
<dbReference type="FunFam" id="2.40.30.10:FF:000007">
    <property type="entry name" value="Translation initiation factor IF-2"/>
    <property type="match status" value="1"/>
</dbReference>
<dbReference type="FunFam" id="2.40.30.10:FF:000008">
    <property type="entry name" value="Translation initiation factor IF-2"/>
    <property type="match status" value="1"/>
</dbReference>
<dbReference type="FunFam" id="3.40.50.10050:FF:000001">
    <property type="entry name" value="Translation initiation factor IF-2"/>
    <property type="match status" value="1"/>
</dbReference>
<dbReference type="FunFam" id="3.40.50.300:FF:000019">
    <property type="entry name" value="Translation initiation factor IF-2"/>
    <property type="match status" value="1"/>
</dbReference>
<dbReference type="Gene3D" id="3.40.50.300">
    <property type="entry name" value="P-loop containing nucleotide triphosphate hydrolases"/>
    <property type="match status" value="1"/>
</dbReference>
<dbReference type="Gene3D" id="2.40.30.10">
    <property type="entry name" value="Translation factors"/>
    <property type="match status" value="2"/>
</dbReference>
<dbReference type="Gene3D" id="3.40.50.10050">
    <property type="entry name" value="Translation initiation factor IF- 2, domain 3"/>
    <property type="match status" value="1"/>
</dbReference>
<dbReference type="HAMAP" id="MF_00100_B">
    <property type="entry name" value="IF_2_B"/>
    <property type="match status" value="1"/>
</dbReference>
<dbReference type="InterPro" id="IPR053905">
    <property type="entry name" value="EF-G-like_DII"/>
</dbReference>
<dbReference type="InterPro" id="IPR013575">
    <property type="entry name" value="IF2_assoc_dom_bac"/>
</dbReference>
<dbReference type="InterPro" id="IPR044145">
    <property type="entry name" value="IF2_II"/>
</dbReference>
<dbReference type="InterPro" id="IPR006847">
    <property type="entry name" value="IF2_N"/>
</dbReference>
<dbReference type="InterPro" id="IPR027417">
    <property type="entry name" value="P-loop_NTPase"/>
</dbReference>
<dbReference type="InterPro" id="IPR005225">
    <property type="entry name" value="Small_GTP-bd"/>
</dbReference>
<dbReference type="InterPro" id="IPR000795">
    <property type="entry name" value="T_Tr_GTP-bd_dom"/>
</dbReference>
<dbReference type="InterPro" id="IPR000178">
    <property type="entry name" value="TF_IF2_bacterial-like"/>
</dbReference>
<dbReference type="InterPro" id="IPR015760">
    <property type="entry name" value="TIF_IF2"/>
</dbReference>
<dbReference type="InterPro" id="IPR023115">
    <property type="entry name" value="TIF_IF2_dom3"/>
</dbReference>
<dbReference type="InterPro" id="IPR036925">
    <property type="entry name" value="TIF_IF2_dom3_sf"/>
</dbReference>
<dbReference type="InterPro" id="IPR009000">
    <property type="entry name" value="Transl_B-barrel_sf"/>
</dbReference>
<dbReference type="NCBIfam" id="TIGR00487">
    <property type="entry name" value="IF-2"/>
    <property type="match status" value="1"/>
</dbReference>
<dbReference type="NCBIfam" id="TIGR00231">
    <property type="entry name" value="small_GTP"/>
    <property type="match status" value="1"/>
</dbReference>
<dbReference type="PANTHER" id="PTHR43381:SF5">
    <property type="entry name" value="TR-TYPE G DOMAIN-CONTAINING PROTEIN"/>
    <property type="match status" value="1"/>
</dbReference>
<dbReference type="PANTHER" id="PTHR43381">
    <property type="entry name" value="TRANSLATION INITIATION FACTOR IF-2-RELATED"/>
    <property type="match status" value="1"/>
</dbReference>
<dbReference type="Pfam" id="PF22042">
    <property type="entry name" value="EF-G_D2"/>
    <property type="match status" value="1"/>
</dbReference>
<dbReference type="Pfam" id="PF00009">
    <property type="entry name" value="GTP_EFTU"/>
    <property type="match status" value="1"/>
</dbReference>
<dbReference type="Pfam" id="PF11987">
    <property type="entry name" value="IF-2"/>
    <property type="match status" value="1"/>
</dbReference>
<dbReference type="Pfam" id="PF08364">
    <property type="entry name" value="IF2_assoc"/>
    <property type="match status" value="1"/>
</dbReference>
<dbReference type="Pfam" id="PF04760">
    <property type="entry name" value="IF2_N"/>
    <property type="match status" value="1"/>
</dbReference>
<dbReference type="SUPFAM" id="SSF52156">
    <property type="entry name" value="Initiation factor IF2/eIF5b, domain 3"/>
    <property type="match status" value="1"/>
</dbReference>
<dbReference type="SUPFAM" id="SSF52540">
    <property type="entry name" value="P-loop containing nucleoside triphosphate hydrolases"/>
    <property type="match status" value="1"/>
</dbReference>
<dbReference type="SUPFAM" id="SSF50447">
    <property type="entry name" value="Translation proteins"/>
    <property type="match status" value="2"/>
</dbReference>
<dbReference type="PROSITE" id="PS51722">
    <property type="entry name" value="G_TR_2"/>
    <property type="match status" value="1"/>
</dbReference>
<dbReference type="PROSITE" id="PS01176">
    <property type="entry name" value="IF2"/>
    <property type="match status" value="1"/>
</dbReference>
<protein>
    <recommendedName>
        <fullName evidence="2">Translation initiation factor IF-2</fullName>
    </recommendedName>
</protein>
<name>IF2_RUEST</name>
<comment type="function">
    <text evidence="2">One of the essential components for the initiation of protein synthesis. Protects formylmethionyl-tRNA from spontaneous hydrolysis and promotes its binding to the 30S ribosomal subunits. Also involved in the hydrolysis of GTP during the formation of the 70S ribosomal complex.</text>
</comment>
<comment type="subcellular location">
    <subcellularLocation>
        <location evidence="2">Cytoplasm</location>
    </subcellularLocation>
</comment>
<comment type="similarity">
    <text evidence="2">Belongs to the TRAFAC class translation factor GTPase superfamily. Classic translation factor GTPase family. IF-2 subfamily.</text>
</comment>